<protein>
    <recommendedName>
        <fullName>NADH-ubiquinone oxidoreductase 75 kDa subunit, mitochondrial</fullName>
        <ecNumber evidence="2">7.1.1.2</ecNumber>
    </recommendedName>
    <alternativeName>
        <fullName>Complex I-75kD</fullName>
        <shortName>CI-75kD</shortName>
    </alternativeName>
</protein>
<accession>Q0MQG2</accession>
<organism>
    <name type="scientific">Pan troglodytes</name>
    <name type="common">Chimpanzee</name>
    <dbReference type="NCBI Taxonomy" id="9598"/>
    <lineage>
        <taxon>Eukaryota</taxon>
        <taxon>Metazoa</taxon>
        <taxon>Chordata</taxon>
        <taxon>Craniata</taxon>
        <taxon>Vertebrata</taxon>
        <taxon>Euteleostomi</taxon>
        <taxon>Mammalia</taxon>
        <taxon>Eutheria</taxon>
        <taxon>Euarchontoglires</taxon>
        <taxon>Primates</taxon>
        <taxon>Haplorrhini</taxon>
        <taxon>Catarrhini</taxon>
        <taxon>Hominidae</taxon>
        <taxon>Pan</taxon>
    </lineage>
</organism>
<reference key="1">
    <citation type="journal article" date="2006" name="Gene">
        <title>Adaptive selection of mitochondrial complex I subunits during primate radiation.</title>
        <authorList>
            <person name="Mishmar D."/>
            <person name="Ruiz-Pesini E."/>
            <person name="Mondragon-Palomino M."/>
            <person name="Procaccio V."/>
            <person name="Gaut B."/>
            <person name="Wallace D.C."/>
        </authorList>
    </citation>
    <scope>NUCLEOTIDE SEQUENCE [MRNA]</scope>
</reference>
<proteinExistence type="evidence at transcript level"/>
<keyword id="KW-0001">2Fe-2S</keyword>
<keyword id="KW-0004">4Fe-4S</keyword>
<keyword id="KW-0007">Acetylation</keyword>
<keyword id="KW-0249">Electron transport</keyword>
<keyword id="KW-0408">Iron</keyword>
<keyword id="KW-0411">Iron-sulfur</keyword>
<keyword id="KW-0472">Membrane</keyword>
<keyword id="KW-0479">Metal-binding</keyword>
<keyword id="KW-0496">Mitochondrion</keyword>
<keyword id="KW-0999">Mitochondrion inner membrane</keyword>
<keyword id="KW-0520">NAD</keyword>
<keyword id="KW-0560">Oxidoreductase</keyword>
<keyword id="KW-1185">Reference proteome</keyword>
<keyword id="KW-0679">Respiratory chain</keyword>
<keyword id="KW-0809">Transit peptide</keyword>
<keyword id="KW-1278">Translocase</keyword>
<keyword id="KW-0813">Transport</keyword>
<keyword id="KW-0830">Ubiquinone</keyword>
<gene>
    <name type="primary">NDUFS1</name>
</gene>
<name>NDUS1_PANTR</name>
<feature type="transit peptide" description="Mitochondrion" evidence="1">
    <location>
        <begin position="1"/>
        <end position="23"/>
    </location>
</feature>
<feature type="chain" id="PRO_0000251855" description="NADH-ubiquinone oxidoreductase 75 kDa subunit, mitochondrial">
    <location>
        <begin position="24"/>
        <end position="727"/>
    </location>
</feature>
<feature type="domain" description="2Fe-2S ferredoxin-type" evidence="5">
    <location>
        <begin position="30"/>
        <end position="108"/>
    </location>
</feature>
<feature type="domain" description="4Fe-4S His(Cys)3-ligated-type" evidence="7">
    <location>
        <begin position="108"/>
        <end position="147"/>
    </location>
</feature>
<feature type="domain" description="4Fe-4S Mo/W bis-MGD-type" evidence="6">
    <location>
        <begin position="245"/>
        <end position="301"/>
    </location>
</feature>
<feature type="binding site" evidence="3">
    <location>
        <position position="64"/>
    </location>
    <ligand>
        <name>[2Fe-2S] cluster</name>
        <dbReference type="ChEBI" id="CHEBI:190135"/>
    </ligand>
</feature>
<feature type="binding site" evidence="3">
    <location>
        <position position="75"/>
    </location>
    <ligand>
        <name>[2Fe-2S] cluster</name>
        <dbReference type="ChEBI" id="CHEBI:190135"/>
    </ligand>
</feature>
<feature type="binding site" evidence="3">
    <location>
        <position position="78"/>
    </location>
    <ligand>
        <name>[2Fe-2S] cluster</name>
        <dbReference type="ChEBI" id="CHEBI:190135"/>
    </ligand>
</feature>
<feature type="binding site" evidence="3">
    <location>
        <position position="92"/>
    </location>
    <ligand>
        <name>[2Fe-2S] cluster</name>
        <dbReference type="ChEBI" id="CHEBI:190135"/>
    </ligand>
</feature>
<feature type="binding site" evidence="7">
    <location>
        <position position="124"/>
    </location>
    <ligand>
        <name>[4Fe-4S] cluster</name>
        <dbReference type="ChEBI" id="CHEBI:49883"/>
        <label>1</label>
    </ligand>
</feature>
<feature type="binding site" evidence="7">
    <location>
        <position position="128"/>
    </location>
    <ligand>
        <name>[4Fe-4S] cluster</name>
        <dbReference type="ChEBI" id="CHEBI:49883"/>
        <label>1</label>
    </ligand>
</feature>
<feature type="binding site" evidence="7">
    <location>
        <position position="131"/>
    </location>
    <ligand>
        <name>[4Fe-4S] cluster</name>
        <dbReference type="ChEBI" id="CHEBI:49883"/>
        <label>1</label>
    </ligand>
</feature>
<feature type="binding site" evidence="7">
    <location>
        <position position="137"/>
    </location>
    <ligand>
        <name>[4Fe-4S] cluster</name>
        <dbReference type="ChEBI" id="CHEBI:49883"/>
        <label>1</label>
    </ligand>
</feature>
<feature type="binding site" evidence="3">
    <location>
        <position position="176"/>
    </location>
    <ligand>
        <name>[4Fe-4S] cluster</name>
        <dbReference type="ChEBI" id="CHEBI:49883"/>
        <label>2</label>
    </ligand>
</feature>
<feature type="binding site" evidence="3">
    <location>
        <position position="179"/>
    </location>
    <ligand>
        <name>[4Fe-4S] cluster</name>
        <dbReference type="ChEBI" id="CHEBI:49883"/>
        <label>2</label>
    </ligand>
</feature>
<feature type="binding site" evidence="3">
    <location>
        <position position="182"/>
    </location>
    <ligand>
        <name>[4Fe-4S] cluster</name>
        <dbReference type="ChEBI" id="CHEBI:49883"/>
        <label>2</label>
    </ligand>
</feature>
<feature type="binding site" evidence="3">
    <location>
        <position position="226"/>
    </location>
    <ligand>
        <name>[4Fe-4S] cluster</name>
        <dbReference type="ChEBI" id="CHEBI:49883"/>
        <label>2</label>
    </ligand>
</feature>
<feature type="modified residue" description="N6-acetyllysine" evidence="4">
    <location>
        <position position="84"/>
    </location>
</feature>
<feature type="modified residue" description="N6-acetyllysine" evidence="4">
    <location>
        <position position="467"/>
    </location>
</feature>
<feature type="modified residue" description="N6-acetyllysine" evidence="4">
    <location>
        <position position="499"/>
    </location>
</feature>
<feature type="modified residue" description="N6-acetyllysine" evidence="4">
    <location>
        <position position="709"/>
    </location>
</feature>
<dbReference type="EC" id="7.1.1.2" evidence="2"/>
<dbReference type="EMBL" id="DQ885672">
    <property type="protein sequence ID" value="ABH12181.1"/>
    <property type="molecule type" value="mRNA"/>
</dbReference>
<dbReference type="RefSeq" id="NP_001073384.1">
    <property type="nucleotide sequence ID" value="NM_001079915.1"/>
</dbReference>
<dbReference type="SMR" id="Q0MQG2"/>
<dbReference type="FunCoup" id="Q0MQG2">
    <property type="interactions" value="1563"/>
</dbReference>
<dbReference type="STRING" id="9598.ENSPTRP00000068687"/>
<dbReference type="PaxDb" id="9598-ENSPTRP00000021965"/>
<dbReference type="GeneID" id="459896"/>
<dbReference type="KEGG" id="ptr:459896"/>
<dbReference type="CTD" id="4719"/>
<dbReference type="eggNOG" id="KOG2282">
    <property type="taxonomic scope" value="Eukaryota"/>
</dbReference>
<dbReference type="InParanoid" id="Q0MQG2"/>
<dbReference type="OrthoDB" id="1982at9604"/>
<dbReference type="Proteomes" id="UP000002277">
    <property type="component" value="Unplaced"/>
</dbReference>
<dbReference type="GO" id="GO:0005743">
    <property type="term" value="C:mitochondrial inner membrane"/>
    <property type="evidence" value="ECO:0000250"/>
    <property type="project" value="UniProtKB"/>
</dbReference>
<dbReference type="GO" id="GO:0005758">
    <property type="term" value="C:mitochondrial intermembrane space"/>
    <property type="evidence" value="ECO:0000250"/>
    <property type="project" value="UniProtKB"/>
</dbReference>
<dbReference type="GO" id="GO:0005739">
    <property type="term" value="C:mitochondrion"/>
    <property type="evidence" value="ECO:0000250"/>
    <property type="project" value="UniProtKB"/>
</dbReference>
<dbReference type="GO" id="GO:0045271">
    <property type="term" value="C:respiratory chain complex I"/>
    <property type="evidence" value="ECO:0000250"/>
    <property type="project" value="UniProtKB"/>
</dbReference>
<dbReference type="GO" id="GO:0051537">
    <property type="term" value="F:2 iron, 2 sulfur cluster binding"/>
    <property type="evidence" value="ECO:0007669"/>
    <property type="project" value="UniProtKB-KW"/>
</dbReference>
<dbReference type="GO" id="GO:0051539">
    <property type="term" value="F:4 iron, 4 sulfur cluster binding"/>
    <property type="evidence" value="ECO:0007669"/>
    <property type="project" value="UniProtKB-KW"/>
</dbReference>
<dbReference type="GO" id="GO:0046872">
    <property type="term" value="F:metal ion binding"/>
    <property type="evidence" value="ECO:0007669"/>
    <property type="project" value="UniProtKB-KW"/>
</dbReference>
<dbReference type="GO" id="GO:0008137">
    <property type="term" value="F:NADH dehydrogenase (ubiquinone) activity"/>
    <property type="evidence" value="ECO:0000250"/>
    <property type="project" value="UniProtKB"/>
</dbReference>
<dbReference type="GO" id="GO:0006120">
    <property type="term" value="P:mitochondrial electron transport, NADH to ubiquinone"/>
    <property type="evidence" value="ECO:0000250"/>
    <property type="project" value="UniProtKB"/>
</dbReference>
<dbReference type="GO" id="GO:0032981">
    <property type="term" value="P:mitochondrial respiratory chain complex I assembly"/>
    <property type="evidence" value="ECO:0000250"/>
    <property type="project" value="UniProtKB"/>
</dbReference>
<dbReference type="CDD" id="cd00207">
    <property type="entry name" value="fer2"/>
    <property type="match status" value="1"/>
</dbReference>
<dbReference type="CDD" id="cd02773">
    <property type="entry name" value="MopB_Res-Cmplx1_Nad11"/>
    <property type="match status" value="1"/>
</dbReference>
<dbReference type="FunFam" id="3.10.20.740:FF:000001">
    <property type="entry name" value="NADH-quinone oxidoreductase subunit G"/>
    <property type="match status" value="1"/>
</dbReference>
<dbReference type="FunFam" id="3.30.200.210:FF:000002">
    <property type="entry name" value="NADH-ubiquinone oxidoreductase 75 kDa subunit"/>
    <property type="match status" value="1"/>
</dbReference>
<dbReference type="FunFam" id="3.30.70.20:FF:000002">
    <property type="entry name" value="NADH-ubiquinone oxidoreductase 75 kDa subunit"/>
    <property type="match status" value="1"/>
</dbReference>
<dbReference type="FunFam" id="3.40.50.740:FF:000002">
    <property type="entry name" value="NADH-ubiquinone oxidoreductase 75 kDa subunit, mitochondrial"/>
    <property type="match status" value="1"/>
</dbReference>
<dbReference type="Gene3D" id="3.10.20.740">
    <property type="match status" value="1"/>
</dbReference>
<dbReference type="Gene3D" id="3.30.200.210">
    <property type="match status" value="1"/>
</dbReference>
<dbReference type="Gene3D" id="3.30.70.20">
    <property type="match status" value="1"/>
</dbReference>
<dbReference type="Gene3D" id="3.40.50.740">
    <property type="match status" value="1"/>
</dbReference>
<dbReference type="InterPro" id="IPR036010">
    <property type="entry name" value="2Fe-2S_ferredoxin-like_sf"/>
</dbReference>
<dbReference type="InterPro" id="IPR001041">
    <property type="entry name" value="2Fe-2S_ferredoxin-type"/>
</dbReference>
<dbReference type="InterPro" id="IPR006656">
    <property type="entry name" value="Mopterin_OxRdtase"/>
</dbReference>
<dbReference type="InterPro" id="IPR006963">
    <property type="entry name" value="Mopterin_OxRdtase_4Fe-4S_dom"/>
</dbReference>
<dbReference type="InterPro" id="IPR000283">
    <property type="entry name" value="NADH_UbQ_OxRdtase_75kDa_su_CS"/>
</dbReference>
<dbReference type="InterPro" id="IPR054351">
    <property type="entry name" value="NADH_UbQ_OxRdtase_ferredoxin"/>
</dbReference>
<dbReference type="InterPro" id="IPR010228">
    <property type="entry name" value="NADH_UbQ_OxRdtase_Gsu"/>
</dbReference>
<dbReference type="InterPro" id="IPR019574">
    <property type="entry name" value="NADH_UbQ_OxRdtase_Gsu_4Fe4S-bd"/>
</dbReference>
<dbReference type="InterPro" id="IPR015405">
    <property type="entry name" value="NDUFS1-like_C"/>
</dbReference>
<dbReference type="InterPro" id="IPR050123">
    <property type="entry name" value="Prok_molybdopt-oxidoreductase"/>
</dbReference>
<dbReference type="NCBIfam" id="TIGR01973">
    <property type="entry name" value="NuoG"/>
    <property type="match status" value="1"/>
</dbReference>
<dbReference type="PANTHER" id="PTHR43105:SF13">
    <property type="entry name" value="NADH-UBIQUINONE OXIDOREDUCTASE 75 KDA SUBUNIT, MITOCHONDRIAL"/>
    <property type="match status" value="1"/>
</dbReference>
<dbReference type="PANTHER" id="PTHR43105">
    <property type="entry name" value="RESPIRATORY NITRATE REDUCTASE"/>
    <property type="match status" value="1"/>
</dbReference>
<dbReference type="Pfam" id="PF13510">
    <property type="entry name" value="Fer2_4"/>
    <property type="match status" value="1"/>
</dbReference>
<dbReference type="Pfam" id="PF22151">
    <property type="entry name" value="Fer4_NDSU1"/>
    <property type="match status" value="1"/>
</dbReference>
<dbReference type="Pfam" id="PF22117">
    <property type="entry name" value="Fer4_Nqo3"/>
    <property type="match status" value="1"/>
</dbReference>
<dbReference type="Pfam" id="PF00384">
    <property type="entry name" value="Molybdopterin"/>
    <property type="match status" value="1"/>
</dbReference>
<dbReference type="Pfam" id="PF10588">
    <property type="entry name" value="NADH-G_4Fe-4S_3"/>
    <property type="match status" value="1"/>
</dbReference>
<dbReference type="Pfam" id="PF09326">
    <property type="entry name" value="NADH_dhqG_C"/>
    <property type="match status" value="1"/>
</dbReference>
<dbReference type="SMART" id="SM00929">
    <property type="entry name" value="NADH-G_4Fe-4S_3"/>
    <property type="match status" value="1"/>
</dbReference>
<dbReference type="SUPFAM" id="SSF54292">
    <property type="entry name" value="2Fe-2S ferredoxin-like"/>
    <property type="match status" value="1"/>
</dbReference>
<dbReference type="SUPFAM" id="SSF54862">
    <property type="entry name" value="4Fe-4S ferredoxins"/>
    <property type="match status" value="1"/>
</dbReference>
<dbReference type="SUPFAM" id="SSF53706">
    <property type="entry name" value="Formate dehydrogenase/DMSO reductase, domains 1-3"/>
    <property type="match status" value="1"/>
</dbReference>
<dbReference type="PROSITE" id="PS51085">
    <property type="entry name" value="2FE2S_FER_2"/>
    <property type="match status" value="1"/>
</dbReference>
<dbReference type="PROSITE" id="PS51839">
    <property type="entry name" value="4FE4S_HC3"/>
    <property type="match status" value="1"/>
</dbReference>
<dbReference type="PROSITE" id="PS51669">
    <property type="entry name" value="4FE4S_MOW_BIS_MGD"/>
    <property type="match status" value="1"/>
</dbReference>
<dbReference type="PROSITE" id="PS00641">
    <property type="entry name" value="COMPLEX1_75K_1"/>
    <property type="match status" value="1"/>
</dbReference>
<dbReference type="PROSITE" id="PS00642">
    <property type="entry name" value="COMPLEX1_75K_2"/>
    <property type="match status" value="1"/>
</dbReference>
<dbReference type="PROSITE" id="PS00643">
    <property type="entry name" value="COMPLEX1_75K_3"/>
    <property type="match status" value="1"/>
</dbReference>
<comment type="function">
    <text evidence="2">Core subunit of the mitochondrial membrane respiratory chain NADH dehydrogenase (Complex I) which catalyzes electron transfer from NADH through the respiratory chain, using ubiquinone as an electron acceptor (By similarity). Essential for catalysing the entry and efficient transfer of electrons within complex I (By similarity). Plays a key role in the assembly and stability of complex I and participates in the association of complex I with ubiquinol-cytochrome reductase complex (Complex III) to form supercomplexes (By similarity).</text>
</comment>
<comment type="catalytic activity">
    <reaction evidence="2">
        <text>a ubiquinone + NADH + 5 H(+)(in) = a ubiquinol + NAD(+) + 4 H(+)(out)</text>
        <dbReference type="Rhea" id="RHEA:29091"/>
        <dbReference type="Rhea" id="RHEA-COMP:9565"/>
        <dbReference type="Rhea" id="RHEA-COMP:9566"/>
        <dbReference type="ChEBI" id="CHEBI:15378"/>
        <dbReference type="ChEBI" id="CHEBI:16389"/>
        <dbReference type="ChEBI" id="CHEBI:17976"/>
        <dbReference type="ChEBI" id="CHEBI:57540"/>
        <dbReference type="ChEBI" id="CHEBI:57945"/>
        <dbReference type="EC" id="7.1.1.2"/>
    </reaction>
</comment>
<comment type="cofactor">
    <cofactor evidence="3">
        <name>[2Fe-2S] cluster</name>
        <dbReference type="ChEBI" id="CHEBI:190135"/>
    </cofactor>
    <text evidence="3">Binds 1 [2Fe-2S] cluster per subunit.</text>
</comment>
<comment type="cofactor">
    <cofactor evidence="3">
        <name>[4Fe-4S] cluster</name>
        <dbReference type="ChEBI" id="CHEBI:49883"/>
    </cofactor>
    <text evidence="3">Binds 2 [4Fe-4S] clusters per subunit.</text>
</comment>
<comment type="subunit">
    <text evidence="1 2 4">Core subunit of respiratory chain NADH dehydrogenase (Complex I) which is composed of 45 different subunits (By similarity). This is the largest subunit of complex I and it is a component of the iron-sulfur (IP) fragment of the enzyme (By similarity). Complex I associates with ubiquinol-cytochrome reductase complex (Complex III) to form supercomplexes (By similarity). Interacts with MDM2 and AKAP1 (By similarity).</text>
</comment>
<comment type="subcellular location">
    <subcellularLocation>
        <location evidence="1">Mitochondrion inner membrane</location>
        <topology evidence="1">Peripheral membrane protein</topology>
        <orientation evidence="1">Matrix side</orientation>
    </subcellularLocation>
</comment>
<comment type="similarity">
    <text evidence="8">Belongs to the complex I 75 kDa subunit family.</text>
</comment>
<sequence length="727" mass="79523">MLRIPVRKALVVLSKSPKGCVRTTATAASNLIEVFVDGQSVMVEPGTTVLQACEKVGMQIPRFCYHERLSVAGNCRMCLVEIEKAPKVVAACAMPVMKGWNILTNSKKSKKAREGVMEFLLANHPLDCPICDQGGECDLQDQSMMFGNDRSRFLEGKRAVEDKNIGPLVKTIMTRCIQCTRCIRFASEIAGVDDLGTTGRGNDMQVGTYIEKMFMSELSGNIIDICPVGALTSKPYAFTARPWETRKTESIDVMDAVGSNIVVSTRTGEVMRILPRMHEDINEEWISDKTRFAYDGLKRQRLTEPMVRNEKGLLTYTSWEDALSRVAGMLQTFQGKDVAAIAGGLVDAEALVALKDLLNRVDSDTLCTEEVFPTAGAGTDLRSNYLLNTTIAGVEEADVVLLVGTNPRFEAPLFNARLRKSWLHNDLKVALIGSPVDLTYTYDHLGDSPKILQDIASGSHPFSQVLKEAKKPMVVLGSSALQRNDGAAILAAVSSIAQKIRMTSGVTGDWKVMNILHRIASQVAALDLGYKPGVEAIRKNPPKVLFLLGADGGCITRQDLPKDCFIIYQGHHGDVGAPIADVILPGAAYTEKSATYVNTEGRAQQTKVAVTPPGLAREDWKIIRALSEIAGMTLPYDTLDQVRNRLEEVSPNLVRYDDIEGANYFQQANELSKLVNQQLLADPLVPPQLTIKDFYMTDSISRASQTMAKCVKAVTEGAQAVEEPSIC</sequence>
<evidence type="ECO:0000250" key="1">
    <source>
        <dbReference type="UniProtKB" id="P15690"/>
    </source>
</evidence>
<evidence type="ECO:0000250" key="2">
    <source>
        <dbReference type="UniProtKB" id="P28331"/>
    </source>
</evidence>
<evidence type="ECO:0000250" key="3">
    <source>
        <dbReference type="UniProtKB" id="Q56223"/>
    </source>
</evidence>
<evidence type="ECO:0000250" key="4">
    <source>
        <dbReference type="UniProtKB" id="Q91VD9"/>
    </source>
</evidence>
<evidence type="ECO:0000255" key="5">
    <source>
        <dbReference type="PROSITE-ProRule" id="PRU00465"/>
    </source>
</evidence>
<evidence type="ECO:0000255" key="6">
    <source>
        <dbReference type="PROSITE-ProRule" id="PRU01004"/>
    </source>
</evidence>
<evidence type="ECO:0000255" key="7">
    <source>
        <dbReference type="PROSITE-ProRule" id="PRU01184"/>
    </source>
</evidence>
<evidence type="ECO:0000305" key="8"/>